<accession>C3MAY2</accession>
<name>RL23_SINFN</name>
<proteinExistence type="inferred from homology"/>
<keyword id="KW-1185">Reference proteome</keyword>
<keyword id="KW-0687">Ribonucleoprotein</keyword>
<keyword id="KW-0689">Ribosomal protein</keyword>
<keyword id="KW-0694">RNA-binding</keyword>
<keyword id="KW-0699">rRNA-binding</keyword>
<protein>
    <recommendedName>
        <fullName evidence="1">Large ribosomal subunit protein uL23</fullName>
    </recommendedName>
    <alternativeName>
        <fullName evidence="2">50S ribosomal protein L23</fullName>
    </alternativeName>
</protein>
<evidence type="ECO:0000255" key="1">
    <source>
        <dbReference type="HAMAP-Rule" id="MF_01369"/>
    </source>
</evidence>
<evidence type="ECO:0000305" key="2"/>
<dbReference type="EMBL" id="CP001389">
    <property type="protein sequence ID" value="ACP24975.1"/>
    <property type="molecule type" value="Genomic_DNA"/>
</dbReference>
<dbReference type="RefSeq" id="WP_012707756.1">
    <property type="nucleotide sequence ID" value="NC_012587.1"/>
</dbReference>
<dbReference type="RefSeq" id="YP_002825728.1">
    <property type="nucleotide sequence ID" value="NC_012587.1"/>
</dbReference>
<dbReference type="SMR" id="C3MAY2"/>
<dbReference type="STRING" id="394.NGR_c11930"/>
<dbReference type="KEGG" id="rhi:NGR_c11930"/>
<dbReference type="PATRIC" id="fig|394.7.peg.4009"/>
<dbReference type="eggNOG" id="COG0089">
    <property type="taxonomic scope" value="Bacteria"/>
</dbReference>
<dbReference type="HOGENOM" id="CLU_037562_3_1_5"/>
<dbReference type="OrthoDB" id="9793353at2"/>
<dbReference type="Proteomes" id="UP000001054">
    <property type="component" value="Chromosome"/>
</dbReference>
<dbReference type="GO" id="GO:1990904">
    <property type="term" value="C:ribonucleoprotein complex"/>
    <property type="evidence" value="ECO:0007669"/>
    <property type="project" value="UniProtKB-KW"/>
</dbReference>
<dbReference type="GO" id="GO:0005840">
    <property type="term" value="C:ribosome"/>
    <property type="evidence" value="ECO:0007669"/>
    <property type="project" value="UniProtKB-KW"/>
</dbReference>
<dbReference type="GO" id="GO:0019843">
    <property type="term" value="F:rRNA binding"/>
    <property type="evidence" value="ECO:0007669"/>
    <property type="project" value="UniProtKB-UniRule"/>
</dbReference>
<dbReference type="GO" id="GO:0003735">
    <property type="term" value="F:structural constituent of ribosome"/>
    <property type="evidence" value="ECO:0007669"/>
    <property type="project" value="InterPro"/>
</dbReference>
<dbReference type="GO" id="GO:0006412">
    <property type="term" value="P:translation"/>
    <property type="evidence" value="ECO:0007669"/>
    <property type="project" value="UniProtKB-UniRule"/>
</dbReference>
<dbReference type="FunFam" id="3.30.70.330:FF:000001">
    <property type="entry name" value="50S ribosomal protein L23"/>
    <property type="match status" value="1"/>
</dbReference>
<dbReference type="Gene3D" id="3.30.70.330">
    <property type="match status" value="1"/>
</dbReference>
<dbReference type="HAMAP" id="MF_01369_B">
    <property type="entry name" value="Ribosomal_uL23_B"/>
    <property type="match status" value="1"/>
</dbReference>
<dbReference type="InterPro" id="IPR012677">
    <property type="entry name" value="Nucleotide-bd_a/b_plait_sf"/>
</dbReference>
<dbReference type="InterPro" id="IPR013025">
    <property type="entry name" value="Ribosomal_uL23-like"/>
</dbReference>
<dbReference type="InterPro" id="IPR012678">
    <property type="entry name" value="Ribosomal_uL23/eL15/eS24_sf"/>
</dbReference>
<dbReference type="NCBIfam" id="NF004359">
    <property type="entry name" value="PRK05738.1-3"/>
    <property type="match status" value="1"/>
</dbReference>
<dbReference type="NCBIfam" id="NF004360">
    <property type="entry name" value="PRK05738.1-5"/>
    <property type="match status" value="1"/>
</dbReference>
<dbReference type="NCBIfam" id="NF004363">
    <property type="entry name" value="PRK05738.2-4"/>
    <property type="match status" value="1"/>
</dbReference>
<dbReference type="PANTHER" id="PTHR11620">
    <property type="entry name" value="60S RIBOSOMAL PROTEIN L23A"/>
    <property type="match status" value="1"/>
</dbReference>
<dbReference type="Pfam" id="PF00276">
    <property type="entry name" value="Ribosomal_L23"/>
    <property type="match status" value="1"/>
</dbReference>
<dbReference type="SUPFAM" id="SSF54189">
    <property type="entry name" value="Ribosomal proteins S24e, L23 and L15e"/>
    <property type="match status" value="1"/>
</dbReference>
<reference key="1">
    <citation type="journal article" date="2009" name="Appl. Environ. Microbiol.">
        <title>Rhizobium sp. strain NGR234 possesses a remarkable number of secretion systems.</title>
        <authorList>
            <person name="Schmeisser C."/>
            <person name="Liesegang H."/>
            <person name="Krysciak D."/>
            <person name="Bakkou N."/>
            <person name="Le Quere A."/>
            <person name="Wollherr A."/>
            <person name="Heinemeyer I."/>
            <person name="Morgenstern B."/>
            <person name="Pommerening-Roeser A."/>
            <person name="Flores M."/>
            <person name="Palacios R."/>
            <person name="Brenner S."/>
            <person name="Gottschalk G."/>
            <person name="Schmitz R.A."/>
            <person name="Broughton W.J."/>
            <person name="Perret X."/>
            <person name="Strittmatter A.W."/>
            <person name="Streit W.R."/>
        </authorList>
    </citation>
    <scope>NUCLEOTIDE SEQUENCE [LARGE SCALE GENOMIC DNA]</scope>
    <source>
        <strain>NBRC 101917 / NGR234</strain>
    </source>
</reference>
<organism>
    <name type="scientific">Sinorhizobium fredii (strain NBRC 101917 / NGR234)</name>
    <dbReference type="NCBI Taxonomy" id="394"/>
    <lineage>
        <taxon>Bacteria</taxon>
        <taxon>Pseudomonadati</taxon>
        <taxon>Pseudomonadota</taxon>
        <taxon>Alphaproteobacteria</taxon>
        <taxon>Hyphomicrobiales</taxon>
        <taxon>Rhizobiaceae</taxon>
        <taxon>Sinorhizobium/Ensifer group</taxon>
        <taxon>Sinorhizobium</taxon>
    </lineage>
</organism>
<sequence>MTDLRHYDVIVSPSITEKSTLVSEQNQVVFNVAKGASKPEIKAAVEALFGVKVTAVNTLVRKGKLKRFRGFAGKQKDVKKAIITLAEGQSIDVSTGL</sequence>
<gene>
    <name evidence="1" type="primary">rplW</name>
    <name type="ordered locus">NGR_c11930</name>
</gene>
<comment type="function">
    <text evidence="1">One of the early assembly proteins it binds 23S rRNA. One of the proteins that surrounds the polypeptide exit tunnel on the outside of the ribosome. Forms the main docking site for trigger factor binding to the ribosome.</text>
</comment>
<comment type="subunit">
    <text evidence="1">Part of the 50S ribosomal subunit. Contacts protein L29, and trigger factor when it is bound to the ribosome.</text>
</comment>
<comment type="similarity">
    <text evidence="1">Belongs to the universal ribosomal protein uL23 family.</text>
</comment>
<feature type="chain" id="PRO_1000184101" description="Large ribosomal subunit protein uL23">
    <location>
        <begin position="1"/>
        <end position="97"/>
    </location>
</feature>